<sequence length="342" mass="38569">MAATSEKQNTTKPPPSPSPLRNSKFCQPNMRILISGGAGFIGSHLVDKLMENEKNEVVVADNYFTGSKENLKKWIGHPRFELIRHDVTEPLLIEVDRIYHLACPASPIFYKYNPVKTIKTNVIGTLNMLGLAKRVGARILLTSTSEVYGDPLIHPQPESYWGNVNPIGVRSCYDEGKRVAETLMFDYHRQHGIEIRIARIFNTYGPRMNIDDGRVVSNFIAQALRGEALTVQKPGTQTRSFCYVSDMVDGLIRLMEGNDTGPINIGNPGEFTMVELAETVKELINPSIEIKMVENTPDDPRQRKPDISKAKEVLGWEPKVKLREGLPLMEEDFRLRLNVPRN</sequence>
<gene>
    <name type="primary">UXS3</name>
    <name type="ordered locus">At5g59290</name>
    <name type="ORF">MNC17.20</name>
</gene>
<protein>
    <recommendedName>
        <fullName>UDP-glucuronic acid decarboxylase 3</fullName>
        <ecNumber>4.1.1.35</ecNumber>
    </recommendedName>
    <alternativeName>
        <fullName>UDP-XYL synthase 3</fullName>
    </alternativeName>
    <alternativeName>
        <fullName>UDP-glucuronate decarboxylase 3</fullName>
        <shortName>UGD</shortName>
        <shortName>UXS-3</shortName>
    </alternativeName>
</protein>
<proteinExistence type="evidence at protein level"/>
<dbReference type="EC" id="4.1.1.35"/>
<dbReference type="EMBL" id="AF387789">
    <property type="protein sequence ID" value="AAK70882.1"/>
    <property type="molecule type" value="mRNA"/>
</dbReference>
<dbReference type="EMBL" id="AB016890">
    <property type="protein sequence ID" value="BAB09774.1"/>
    <property type="molecule type" value="Genomic_DNA"/>
</dbReference>
<dbReference type="EMBL" id="CP002688">
    <property type="protein sequence ID" value="AED97166.1"/>
    <property type="molecule type" value="Genomic_DNA"/>
</dbReference>
<dbReference type="EMBL" id="AF375442">
    <property type="protein sequence ID" value="AAK53026.1"/>
    <property type="molecule type" value="mRNA"/>
</dbReference>
<dbReference type="EMBL" id="AY093958">
    <property type="protein sequence ID" value="AAM16219.1"/>
    <property type="molecule type" value="mRNA"/>
</dbReference>
<dbReference type="EMBL" id="AY088443">
    <property type="protein sequence ID" value="AAM65979.1"/>
    <property type="molecule type" value="mRNA"/>
</dbReference>
<dbReference type="RefSeq" id="NP_200737.1">
    <molecule id="Q9FIE8-1"/>
    <property type="nucleotide sequence ID" value="NM_125319.3"/>
</dbReference>
<dbReference type="SMR" id="Q9FIE8"/>
<dbReference type="BioGRID" id="21291">
    <property type="interactions" value="1"/>
</dbReference>
<dbReference type="FunCoup" id="Q9FIE8">
    <property type="interactions" value="3702"/>
</dbReference>
<dbReference type="STRING" id="3702.Q9FIE8"/>
<dbReference type="iPTMnet" id="Q9FIE8"/>
<dbReference type="PaxDb" id="3702-AT5G59290.2"/>
<dbReference type="ProteomicsDB" id="243247">
    <molecule id="Q9FIE8-1"/>
</dbReference>
<dbReference type="EnsemblPlants" id="AT5G59290.1">
    <molecule id="Q9FIE8-1"/>
    <property type="protein sequence ID" value="AT5G59290.1"/>
    <property type="gene ID" value="AT5G59290"/>
</dbReference>
<dbReference type="GeneID" id="836047"/>
<dbReference type="Gramene" id="AT5G59290.1">
    <molecule id="Q9FIE8-1"/>
    <property type="protein sequence ID" value="AT5G59290.1"/>
    <property type="gene ID" value="AT5G59290"/>
</dbReference>
<dbReference type="KEGG" id="ath:AT5G59290"/>
<dbReference type="Araport" id="AT5G59290"/>
<dbReference type="TAIR" id="AT5G59290">
    <property type="gene designation" value="UXS3"/>
</dbReference>
<dbReference type="eggNOG" id="KOG1429">
    <property type="taxonomic scope" value="Eukaryota"/>
</dbReference>
<dbReference type="HOGENOM" id="CLU_007383_4_0_1"/>
<dbReference type="InParanoid" id="Q9FIE8"/>
<dbReference type="OMA" id="XVYGSGS"/>
<dbReference type="OrthoDB" id="331544at2759"/>
<dbReference type="PhylomeDB" id="Q9FIE8"/>
<dbReference type="BioCyc" id="ARA:AT5G59290-MONOMER"/>
<dbReference type="BioCyc" id="MetaCyc:AT5G59290-MONOMER"/>
<dbReference type="BRENDA" id="4.1.1.35">
    <property type="organism ID" value="399"/>
</dbReference>
<dbReference type="SABIO-RK" id="Q9FIE8"/>
<dbReference type="UniPathway" id="UPA00796">
    <property type="reaction ID" value="UER00771"/>
</dbReference>
<dbReference type="PRO" id="PR:Q9FIE8"/>
<dbReference type="Proteomes" id="UP000006548">
    <property type="component" value="Chromosome 5"/>
</dbReference>
<dbReference type="ExpressionAtlas" id="Q9FIE8">
    <property type="expression patterns" value="baseline and differential"/>
</dbReference>
<dbReference type="GO" id="GO:0005737">
    <property type="term" value="C:cytoplasm"/>
    <property type="evidence" value="ECO:0007669"/>
    <property type="project" value="UniProtKB-SubCell"/>
</dbReference>
<dbReference type="GO" id="GO:0070403">
    <property type="term" value="F:NAD+ binding"/>
    <property type="evidence" value="ECO:0007669"/>
    <property type="project" value="InterPro"/>
</dbReference>
<dbReference type="GO" id="GO:0048040">
    <property type="term" value="F:UDP-glucuronate decarboxylase activity"/>
    <property type="evidence" value="ECO:0007669"/>
    <property type="project" value="UniProtKB-EC"/>
</dbReference>
<dbReference type="GO" id="GO:0042732">
    <property type="term" value="P:D-xylose metabolic process"/>
    <property type="evidence" value="ECO:0007669"/>
    <property type="project" value="InterPro"/>
</dbReference>
<dbReference type="GO" id="GO:0033320">
    <property type="term" value="P:UDP-D-xylose biosynthetic process"/>
    <property type="evidence" value="ECO:0007669"/>
    <property type="project" value="UniProtKB-UniPathway"/>
</dbReference>
<dbReference type="CDD" id="cd05230">
    <property type="entry name" value="UGD_SDR_e"/>
    <property type="match status" value="1"/>
</dbReference>
<dbReference type="FunFam" id="3.40.50.720:FF:000150">
    <property type="entry name" value="UDP-glucuronic acid decarboxylase 6"/>
    <property type="match status" value="1"/>
</dbReference>
<dbReference type="Gene3D" id="3.40.50.720">
    <property type="entry name" value="NAD(P)-binding Rossmann-like Domain"/>
    <property type="match status" value="1"/>
</dbReference>
<dbReference type="InterPro" id="IPR016040">
    <property type="entry name" value="NAD(P)-bd_dom"/>
</dbReference>
<dbReference type="InterPro" id="IPR036291">
    <property type="entry name" value="NAD(P)-bd_dom_sf"/>
</dbReference>
<dbReference type="InterPro" id="IPR044516">
    <property type="entry name" value="UXS-like"/>
</dbReference>
<dbReference type="PANTHER" id="PTHR43078:SF49">
    <property type="entry name" value="UDP-GLUCURONIC ACID DECARBOXYLASE 3-RELATED"/>
    <property type="match status" value="1"/>
</dbReference>
<dbReference type="PANTHER" id="PTHR43078">
    <property type="entry name" value="UDP-GLUCURONIC ACID DECARBOXYLASE-RELATED"/>
    <property type="match status" value="1"/>
</dbReference>
<dbReference type="Pfam" id="PF16363">
    <property type="entry name" value="GDP_Man_Dehyd"/>
    <property type="match status" value="1"/>
</dbReference>
<dbReference type="SUPFAM" id="SSF51735">
    <property type="entry name" value="NAD(P)-binding Rossmann-fold domains"/>
    <property type="match status" value="1"/>
</dbReference>
<accession>Q9FIE8</accession>
<accession>Q94JQ5</accession>
<name>UXS3_ARATH</name>
<reference key="1">
    <citation type="journal article" date="2002" name="Plant Physiol.">
        <title>Biosynthesis of UDP-xylose. Cloning and characterization of a novel Arabidopsis gene family, UXS, encoding soluble and putative membrane-bound UDP-glucuronic acid decarboxylase isoforms.</title>
        <authorList>
            <person name="Harper A.D."/>
            <person name="Bar-Peled M."/>
        </authorList>
    </citation>
    <scope>NUCLEOTIDE SEQUENCE [MRNA]</scope>
    <scope>GENE FAMILY</scope>
    <scope>FUNCTION</scope>
    <scope>COFACTOR</scope>
    <scope>BIOPHYSICOCHEMICAL PROPERTIES</scope>
    <scope>TISSUE SPECIFICITY</scope>
</reference>
<reference key="2">
    <citation type="journal article" date="1998" name="DNA Res.">
        <title>Structural analysis of Arabidopsis thaliana chromosome 5. VIII. Sequence features of the regions of 1,081,958 bp covered by seventeen physically assigned P1 and TAC clones.</title>
        <authorList>
            <person name="Asamizu E."/>
            <person name="Sato S."/>
            <person name="Kaneko T."/>
            <person name="Nakamura Y."/>
            <person name="Kotani H."/>
            <person name="Miyajima N."/>
            <person name="Tabata S."/>
        </authorList>
    </citation>
    <scope>NUCLEOTIDE SEQUENCE [LARGE SCALE GENOMIC DNA]</scope>
    <source>
        <strain>cv. Columbia</strain>
    </source>
</reference>
<reference key="3">
    <citation type="journal article" date="2017" name="Plant J.">
        <title>Araport11: a complete reannotation of the Arabidopsis thaliana reference genome.</title>
        <authorList>
            <person name="Cheng C.Y."/>
            <person name="Krishnakumar V."/>
            <person name="Chan A.P."/>
            <person name="Thibaud-Nissen F."/>
            <person name="Schobel S."/>
            <person name="Town C.D."/>
        </authorList>
    </citation>
    <scope>GENOME REANNOTATION</scope>
    <source>
        <strain>cv. Columbia</strain>
    </source>
</reference>
<reference key="4">
    <citation type="journal article" date="2003" name="Science">
        <title>Empirical analysis of transcriptional activity in the Arabidopsis genome.</title>
        <authorList>
            <person name="Yamada K."/>
            <person name="Lim J."/>
            <person name="Dale J.M."/>
            <person name="Chen H."/>
            <person name="Shinn P."/>
            <person name="Palm C.J."/>
            <person name="Southwick A.M."/>
            <person name="Wu H.C."/>
            <person name="Kim C.J."/>
            <person name="Nguyen M."/>
            <person name="Pham P.K."/>
            <person name="Cheuk R.F."/>
            <person name="Karlin-Newmann G."/>
            <person name="Liu S.X."/>
            <person name="Lam B."/>
            <person name="Sakano H."/>
            <person name="Wu T."/>
            <person name="Yu G."/>
            <person name="Miranda M."/>
            <person name="Quach H.L."/>
            <person name="Tripp M."/>
            <person name="Chang C.H."/>
            <person name="Lee J.M."/>
            <person name="Toriumi M.J."/>
            <person name="Chan M.M."/>
            <person name="Tang C.C."/>
            <person name="Onodera C.S."/>
            <person name="Deng J.M."/>
            <person name="Akiyama K."/>
            <person name="Ansari Y."/>
            <person name="Arakawa T."/>
            <person name="Banh J."/>
            <person name="Banno F."/>
            <person name="Bowser L."/>
            <person name="Brooks S.Y."/>
            <person name="Carninci P."/>
            <person name="Chao Q."/>
            <person name="Choy N."/>
            <person name="Enju A."/>
            <person name="Goldsmith A.D."/>
            <person name="Gurjal M."/>
            <person name="Hansen N.F."/>
            <person name="Hayashizaki Y."/>
            <person name="Johnson-Hopson C."/>
            <person name="Hsuan V.W."/>
            <person name="Iida K."/>
            <person name="Karnes M."/>
            <person name="Khan S."/>
            <person name="Koesema E."/>
            <person name="Ishida J."/>
            <person name="Jiang P.X."/>
            <person name="Jones T."/>
            <person name="Kawai J."/>
            <person name="Kamiya A."/>
            <person name="Meyers C."/>
            <person name="Nakajima M."/>
            <person name="Narusaka M."/>
            <person name="Seki M."/>
            <person name="Sakurai T."/>
            <person name="Satou M."/>
            <person name="Tamse R."/>
            <person name="Vaysberg M."/>
            <person name="Wallender E.K."/>
            <person name="Wong C."/>
            <person name="Yamamura Y."/>
            <person name="Yuan S."/>
            <person name="Shinozaki K."/>
            <person name="Davis R.W."/>
            <person name="Theologis A."/>
            <person name="Ecker J.R."/>
        </authorList>
    </citation>
    <scope>NUCLEOTIDE SEQUENCE [LARGE SCALE MRNA]</scope>
    <source>
        <strain>cv. Columbia</strain>
    </source>
</reference>
<reference key="5">
    <citation type="submission" date="2002-03" db="EMBL/GenBank/DDBJ databases">
        <title>Full-length cDNA from Arabidopsis thaliana.</title>
        <authorList>
            <person name="Brover V.V."/>
            <person name="Troukhan M.E."/>
            <person name="Alexandrov N.A."/>
            <person name="Lu Y.-P."/>
            <person name="Flavell R.B."/>
            <person name="Feldmann K.A."/>
        </authorList>
    </citation>
    <scope>NUCLEOTIDE SEQUENCE [LARGE SCALE MRNA]</scope>
</reference>
<reference key="6">
    <citation type="journal article" date="2005" name="Planta">
        <title>Biosynthesis of UDP-xylose: characterization of membrane-bound AtUxs2.</title>
        <authorList>
            <person name="Pattathil S."/>
            <person name="Harper A.D."/>
            <person name="Bar-Peled M."/>
        </authorList>
    </citation>
    <scope>SUBCELLULAR LOCATION</scope>
</reference>
<reference key="7">
    <citation type="journal article" date="2006" name="FEBS J.">
        <title>Reconstruction of de novo pathway for synthesis of UDP-glucuronic acid and UDP-xylose from intrinsic UDP-glucose in Saccharomyces cerevisiae.</title>
        <authorList>
            <person name="Oka T."/>
            <person name="Jigami Y."/>
        </authorList>
    </citation>
    <scope>FUNCTION</scope>
</reference>
<comment type="function">
    <text evidence="3 5">Catalyzes the NAD-dependent decarboxylation of UDP-glucuronic acid to UDP-xylose. Necessary for the biosynthesis of the core tetrasaccharide in glycosaminoglycan biosynthesis.</text>
</comment>
<comment type="catalytic activity">
    <reaction>
        <text>UDP-alpha-D-glucuronate + H(+) = UDP-alpha-D-xylose + CO2</text>
        <dbReference type="Rhea" id="RHEA:23916"/>
        <dbReference type="ChEBI" id="CHEBI:15378"/>
        <dbReference type="ChEBI" id="CHEBI:16526"/>
        <dbReference type="ChEBI" id="CHEBI:57632"/>
        <dbReference type="ChEBI" id="CHEBI:58052"/>
        <dbReference type="EC" id="4.1.1.35"/>
    </reaction>
</comment>
<comment type="cofactor">
    <cofactor evidence="3">
        <name>NAD(+)</name>
        <dbReference type="ChEBI" id="CHEBI:57540"/>
    </cofactor>
</comment>
<comment type="biophysicochemical properties">
    <kinetics>
        <KM evidence="3">0.51 mM for UDP-D-glucuronate at 30 degrees Celsius</KM>
    </kinetics>
    <phDependence>
        <text evidence="3">Optimum pH is 5.5 at 30 degrees Celsius.</text>
    </phDependence>
    <temperatureDependence>
        <text evidence="3">Optimum temperature is 30 degrees Celsius.</text>
    </temperatureDependence>
</comment>
<comment type="pathway">
    <text>Nucleotide-sugar biosynthesis; UDP-alpha-D-xylose biosynthesis; UDP-alpha-D-xylose from UDP-alpha-D-glucuronate: step 1/1.</text>
</comment>
<comment type="subcellular location">
    <subcellularLocation>
        <location evidence="4">Cytoplasm</location>
    </subcellularLocation>
</comment>
<comment type="alternative products">
    <event type="alternative splicing"/>
    <isoform>
        <id>Q9FIE8-1</id>
        <name>1</name>
        <sequence type="displayed"/>
    </isoform>
    <text>A number of isoforms are produced. According to EST sequences.</text>
</comment>
<comment type="tissue specificity">
    <text evidence="3">Ubiquitous.</text>
</comment>
<comment type="similarity">
    <text evidence="6">Belongs to the NAD(P)-dependent epimerase/dehydratase family. UDP-glucuronic acid decarboxylase subfamily.</text>
</comment>
<evidence type="ECO:0000250" key="1"/>
<evidence type="ECO:0000256" key="2">
    <source>
        <dbReference type="SAM" id="MobiDB-lite"/>
    </source>
</evidence>
<evidence type="ECO:0000269" key="3">
    <source>
    </source>
</evidence>
<evidence type="ECO:0000269" key="4">
    <source>
    </source>
</evidence>
<evidence type="ECO:0000269" key="5">
    <source>
    </source>
</evidence>
<evidence type="ECO:0000305" key="6"/>
<organism>
    <name type="scientific">Arabidopsis thaliana</name>
    <name type="common">Mouse-ear cress</name>
    <dbReference type="NCBI Taxonomy" id="3702"/>
    <lineage>
        <taxon>Eukaryota</taxon>
        <taxon>Viridiplantae</taxon>
        <taxon>Streptophyta</taxon>
        <taxon>Embryophyta</taxon>
        <taxon>Tracheophyta</taxon>
        <taxon>Spermatophyta</taxon>
        <taxon>Magnoliopsida</taxon>
        <taxon>eudicotyledons</taxon>
        <taxon>Gunneridae</taxon>
        <taxon>Pentapetalae</taxon>
        <taxon>rosids</taxon>
        <taxon>malvids</taxon>
        <taxon>Brassicales</taxon>
        <taxon>Brassicaceae</taxon>
        <taxon>Camelineae</taxon>
        <taxon>Arabidopsis</taxon>
    </lineage>
</organism>
<keyword id="KW-0025">Alternative splicing</keyword>
<keyword id="KW-0963">Cytoplasm</keyword>
<keyword id="KW-0210">Decarboxylase</keyword>
<keyword id="KW-0456">Lyase</keyword>
<keyword id="KW-0520">NAD</keyword>
<keyword id="KW-1185">Reference proteome</keyword>
<feature type="chain" id="PRO_0000421984" description="UDP-glucuronic acid decarboxylase 3">
    <location>
        <begin position="1"/>
        <end position="342"/>
    </location>
</feature>
<feature type="region of interest" description="Disordered" evidence="2">
    <location>
        <begin position="1"/>
        <end position="22"/>
    </location>
</feature>
<feature type="compositionally biased region" description="Polar residues" evidence="2">
    <location>
        <begin position="1"/>
        <end position="11"/>
    </location>
</feature>
<feature type="active site" description="Proton acceptor" evidence="1">
    <location>
        <position position="173"/>
    </location>
</feature>
<feature type="binding site" evidence="1">
    <location>
        <begin position="61"/>
        <end position="86"/>
    </location>
    <ligand>
        <name>NAD(+)</name>
        <dbReference type="ChEBI" id="CHEBI:57540"/>
    </ligand>
</feature>
<feature type="binding site" evidence="1">
    <location>
        <position position="170"/>
    </location>
    <ligand>
        <name>substrate</name>
    </ligand>
</feature>
<feature type="binding site" evidence="1">
    <location>
        <begin position="173"/>
        <end position="177"/>
    </location>
    <ligand>
        <name>NAD(+)</name>
        <dbReference type="ChEBI" id="CHEBI:57540"/>
    </ligand>
</feature>
<feature type="binding site" evidence="1">
    <location>
        <position position="202"/>
    </location>
    <ligand>
        <name>substrate</name>
    </ligand>
</feature>
<feature type="binding site" evidence="1">
    <location>
        <position position="214"/>
    </location>
    <ligand>
        <name>NAD(+)</name>
        <dbReference type="ChEBI" id="CHEBI:57540"/>
    </ligand>
</feature>
<feature type="binding site" evidence="1">
    <location>
        <begin position="215"/>
        <end position="219"/>
    </location>
    <ligand>
        <name>substrate</name>
    </ligand>
</feature>
<feature type="binding site" evidence="1">
    <location>
        <begin position="232"/>
        <end position="239"/>
    </location>
    <ligand>
        <name>substrate</name>
    </ligand>
</feature>
<feature type="binding site" evidence="1">
    <location>
        <begin position="299"/>
        <end position="303"/>
    </location>
    <ligand>
        <name>substrate</name>
    </ligand>
</feature>
<feature type="sequence conflict" description="In Ref. 4; AAK53026/AAM16219." evidence="6" ref="4">
    <original>V</original>
    <variation>D</variation>
    <location>
        <position position="46"/>
    </location>
</feature>